<name>RL4_RHIWR</name>
<organism>
    <name type="scientific">Rhizorhabdus wittichii (strain DSM 6014 / CCUG 31198 / JCM 15750 / NBRC 105917 / EY 4224 / RW1)</name>
    <name type="common">Sphingomonas wittichii</name>
    <dbReference type="NCBI Taxonomy" id="392499"/>
    <lineage>
        <taxon>Bacteria</taxon>
        <taxon>Pseudomonadati</taxon>
        <taxon>Pseudomonadota</taxon>
        <taxon>Alphaproteobacteria</taxon>
        <taxon>Sphingomonadales</taxon>
        <taxon>Sphingomonadaceae</taxon>
        <taxon>Rhizorhabdus</taxon>
    </lineage>
</organism>
<protein>
    <recommendedName>
        <fullName evidence="1">Large ribosomal subunit protein uL4</fullName>
    </recommendedName>
    <alternativeName>
        <fullName evidence="3">50S ribosomal protein L4</fullName>
    </alternativeName>
</protein>
<evidence type="ECO:0000255" key="1">
    <source>
        <dbReference type="HAMAP-Rule" id="MF_01328"/>
    </source>
</evidence>
<evidence type="ECO:0000256" key="2">
    <source>
        <dbReference type="SAM" id="MobiDB-lite"/>
    </source>
</evidence>
<evidence type="ECO:0000305" key="3"/>
<gene>
    <name evidence="1" type="primary">rplD</name>
    <name type="ordered locus">Swit_1352</name>
</gene>
<keyword id="KW-1185">Reference proteome</keyword>
<keyword id="KW-0687">Ribonucleoprotein</keyword>
<keyword id="KW-0689">Ribosomal protein</keyword>
<keyword id="KW-0694">RNA-binding</keyword>
<keyword id="KW-0699">rRNA-binding</keyword>
<feature type="chain" id="PRO_1000052506" description="Large ribosomal subunit protein uL4">
    <location>
        <begin position="1"/>
        <end position="208"/>
    </location>
</feature>
<feature type="region of interest" description="Disordered" evidence="2">
    <location>
        <begin position="47"/>
        <end position="84"/>
    </location>
</feature>
<feature type="compositionally biased region" description="Basic and acidic residues" evidence="2">
    <location>
        <begin position="49"/>
        <end position="58"/>
    </location>
</feature>
<accession>A5V601</accession>
<sequence length="208" mass="22363">MKVKVQTLDAKASGDIELNDEVFAVEPRADILARVVQWQLHNRRAPARAARERSDVARTGKKFGRQKGGGTARHGDRRAPVFIGGGKAHGPRARVFESSLNKKVRALGLKMALSSKAKDGKLVVVDTLELKDAKTKALIAKIGKLGFGATALVIDGEAVDNGFQLASSNIHTINVLPAIGANVYDILKHETLVLTRAAVEKLEARFNG</sequence>
<reference key="1">
    <citation type="journal article" date="2010" name="J. Bacteriol.">
        <title>Genome sequence of the dioxin-mineralizing bacterium Sphingomonas wittichii RW1.</title>
        <authorList>
            <person name="Miller T.R."/>
            <person name="Delcher A.L."/>
            <person name="Salzberg S.L."/>
            <person name="Saunders E."/>
            <person name="Detter J.C."/>
            <person name="Halden R.U."/>
        </authorList>
    </citation>
    <scope>NUCLEOTIDE SEQUENCE [LARGE SCALE GENOMIC DNA]</scope>
    <source>
        <strain>DSM 6014 / CCUG 31198 / JCM 15750 / NBRC 105917 / EY 4224 / RW1</strain>
    </source>
</reference>
<dbReference type="EMBL" id="CP000699">
    <property type="protein sequence ID" value="ABQ67717.1"/>
    <property type="molecule type" value="Genomic_DNA"/>
</dbReference>
<dbReference type="SMR" id="A5V601"/>
<dbReference type="STRING" id="392499.Swit_1352"/>
<dbReference type="PaxDb" id="392499-Swit_1352"/>
<dbReference type="KEGG" id="swi:Swit_1352"/>
<dbReference type="eggNOG" id="COG0088">
    <property type="taxonomic scope" value="Bacteria"/>
</dbReference>
<dbReference type="HOGENOM" id="CLU_041575_5_1_5"/>
<dbReference type="OrthoDB" id="9803201at2"/>
<dbReference type="Proteomes" id="UP000001989">
    <property type="component" value="Chromosome"/>
</dbReference>
<dbReference type="GO" id="GO:1990904">
    <property type="term" value="C:ribonucleoprotein complex"/>
    <property type="evidence" value="ECO:0007669"/>
    <property type="project" value="UniProtKB-KW"/>
</dbReference>
<dbReference type="GO" id="GO:0005840">
    <property type="term" value="C:ribosome"/>
    <property type="evidence" value="ECO:0007669"/>
    <property type="project" value="UniProtKB-KW"/>
</dbReference>
<dbReference type="GO" id="GO:0019843">
    <property type="term" value="F:rRNA binding"/>
    <property type="evidence" value="ECO:0007669"/>
    <property type="project" value="UniProtKB-UniRule"/>
</dbReference>
<dbReference type="GO" id="GO:0003735">
    <property type="term" value="F:structural constituent of ribosome"/>
    <property type="evidence" value="ECO:0007669"/>
    <property type="project" value="InterPro"/>
</dbReference>
<dbReference type="GO" id="GO:0006412">
    <property type="term" value="P:translation"/>
    <property type="evidence" value="ECO:0007669"/>
    <property type="project" value="UniProtKB-UniRule"/>
</dbReference>
<dbReference type="Gene3D" id="3.40.1370.10">
    <property type="match status" value="1"/>
</dbReference>
<dbReference type="HAMAP" id="MF_01328_B">
    <property type="entry name" value="Ribosomal_uL4_B"/>
    <property type="match status" value="1"/>
</dbReference>
<dbReference type="InterPro" id="IPR002136">
    <property type="entry name" value="Ribosomal_uL4"/>
</dbReference>
<dbReference type="InterPro" id="IPR013005">
    <property type="entry name" value="Ribosomal_uL4-like"/>
</dbReference>
<dbReference type="InterPro" id="IPR023574">
    <property type="entry name" value="Ribosomal_uL4_dom_sf"/>
</dbReference>
<dbReference type="NCBIfam" id="TIGR03953">
    <property type="entry name" value="rplD_bact"/>
    <property type="match status" value="1"/>
</dbReference>
<dbReference type="PANTHER" id="PTHR10746">
    <property type="entry name" value="50S RIBOSOMAL PROTEIN L4"/>
    <property type="match status" value="1"/>
</dbReference>
<dbReference type="PANTHER" id="PTHR10746:SF6">
    <property type="entry name" value="LARGE RIBOSOMAL SUBUNIT PROTEIN UL4M"/>
    <property type="match status" value="1"/>
</dbReference>
<dbReference type="Pfam" id="PF00573">
    <property type="entry name" value="Ribosomal_L4"/>
    <property type="match status" value="1"/>
</dbReference>
<dbReference type="SUPFAM" id="SSF52166">
    <property type="entry name" value="Ribosomal protein L4"/>
    <property type="match status" value="1"/>
</dbReference>
<proteinExistence type="inferred from homology"/>
<comment type="function">
    <text evidence="1">One of the primary rRNA binding proteins, this protein initially binds near the 5'-end of the 23S rRNA. It is important during the early stages of 50S assembly. It makes multiple contacts with different domains of the 23S rRNA in the assembled 50S subunit and ribosome.</text>
</comment>
<comment type="function">
    <text evidence="1">Forms part of the polypeptide exit tunnel.</text>
</comment>
<comment type="subunit">
    <text evidence="1">Part of the 50S ribosomal subunit.</text>
</comment>
<comment type="similarity">
    <text evidence="1">Belongs to the universal ribosomal protein uL4 family.</text>
</comment>